<dbReference type="EMBL" id="AM920689">
    <property type="protein sequence ID" value="CAP52844.1"/>
    <property type="molecule type" value="Genomic_DNA"/>
</dbReference>
<dbReference type="PDB" id="8ORN">
    <property type="method" value="X-ray"/>
    <property type="resolution" value="2.20 A"/>
    <property type="chains" value="B/D=22-218"/>
</dbReference>
<dbReference type="PDBsum" id="8ORN"/>
<dbReference type="SMR" id="B0RUA2"/>
<dbReference type="KEGG" id="xca:xcc-b100_3479"/>
<dbReference type="HOGENOM" id="CLU_092816_2_2_6"/>
<dbReference type="Proteomes" id="UP000001188">
    <property type="component" value="Chromosome"/>
</dbReference>
<dbReference type="GO" id="GO:0009279">
    <property type="term" value="C:cell outer membrane"/>
    <property type="evidence" value="ECO:0007669"/>
    <property type="project" value="UniProtKB-SubCell"/>
</dbReference>
<dbReference type="GO" id="GO:0044874">
    <property type="term" value="P:lipoprotein localization to outer membrane"/>
    <property type="evidence" value="ECO:0007669"/>
    <property type="project" value="UniProtKB-UniRule"/>
</dbReference>
<dbReference type="GO" id="GO:0015031">
    <property type="term" value="P:protein transport"/>
    <property type="evidence" value="ECO:0007669"/>
    <property type="project" value="UniProtKB-KW"/>
</dbReference>
<dbReference type="CDD" id="cd16326">
    <property type="entry name" value="LolB"/>
    <property type="match status" value="1"/>
</dbReference>
<dbReference type="Gene3D" id="2.50.20.10">
    <property type="entry name" value="Lipoprotein localisation LolA/LolB/LppX"/>
    <property type="match status" value="1"/>
</dbReference>
<dbReference type="HAMAP" id="MF_00233">
    <property type="entry name" value="LolB"/>
    <property type="match status" value="1"/>
</dbReference>
<dbReference type="InterPro" id="IPR029046">
    <property type="entry name" value="LolA/LolB/LppX"/>
</dbReference>
<dbReference type="InterPro" id="IPR004565">
    <property type="entry name" value="OM_lipoprot_LolB"/>
</dbReference>
<dbReference type="NCBIfam" id="TIGR00548">
    <property type="entry name" value="lolB"/>
    <property type="match status" value="1"/>
</dbReference>
<dbReference type="Pfam" id="PF03550">
    <property type="entry name" value="LolB"/>
    <property type="match status" value="1"/>
</dbReference>
<dbReference type="SUPFAM" id="SSF89392">
    <property type="entry name" value="Prokaryotic lipoproteins and lipoprotein localization factors"/>
    <property type="match status" value="1"/>
</dbReference>
<dbReference type="PROSITE" id="PS51257">
    <property type="entry name" value="PROKAR_LIPOPROTEIN"/>
    <property type="match status" value="1"/>
</dbReference>
<reference key="1">
    <citation type="journal article" date="2008" name="J. Biotechnol.">
        <title>The genome of Xanthomonas campestris pv. campestris B100 and its use for the reconstruction of metabolic pathways involved in xanthan biosynthesis.</title>
        <authorList>
            <person name="Vorhoelter F.-J."/>
            <person name="Schneiker S."/>
            <person name="Goesmann A."/>
            <person name="Krause L."/>
            <person name="Bekel T."/>
            <person name="Kaiser O."/>
            <person name="Linke B."/>
            <person name="Patschkowski T."/>
            <person name="Rueckert C."/>
            <person name="Schmid J."/>
            <person name="Sidhu V.K."/>
            <person name="Sieber V."/>
            <person name="Tauch A."/>
            <person name="Watt S.A."/>
            <person name="Weisshaar B."/>
            <person name="Becker A."/>
            <person name="Niehaus K."/>
            <person name="Puehler A."/>
        </authorList>
    </citation>
    <scope>NUCLEOTIDE SEQUENCE [LARGE SCALE GENOMIC DNA]</scope>
    <source>
        <strain>B100</strain>
    </source>
</reference>
<accession>B0RUA2</accession>
<sequence>MSQVIRTLALTGLALAGLSGCVSVPRGQGGAAPAVVGQVSESARQAEAARQAWLQAHPAWSFQGRVAISKGRDGGSGRLDWQQDGPRYHVQLSAPVTRQSWVLTGDTTTGAGRLEGLDGGPRAGADAEQVLLEATGWTIPVNQMPDWVRALRIADAGAARVDLDEHGRPRTVQQDGWTIDFLEWTPASAAQPELPRRIEARNGDAKVRLLVDQWTLSP</sequence>
<gene>
    <name evidence="1" type="primary">lolB</name>
    <name type="ordered locus">xcc-b100_3479</name>
</gene>
<keyword id="KW-0002">3D-structure</keyword>
<keyword id="KW-0998">Cell outer membrane</keyword>
<keyword id="KW-0143">Chaperone</keyword>
<keyword id="KW-0449">Lipoprotein</keyword>
<keyword id="KW-0472">Membrane</keyword>
<keyword id="KW-0564">Palmitate</keyword>
<keyword id="KW-0653">Protein transport</keyword>
<keyword id="KW-0732">Signal</keyword>
<keyword id="KW-0813">Transport</keyword>
<protein>
    <recommendedName>
        <fullName evidence="1">Outer-membrane lipoprotein LolB</fullName>
    </recommendedName>
</protein>
<evidence type="ECO:0000255" key="1">
    <source>
        <dbReference type="HAMAP-Rule" id="MF_00233"/>
    </source>
</evidence>
<evidence type="ECO:0007829" key="2">
    <source>
        <dbReference type="PDB" id="8ORN"/>
    </source>
</evidence>
<comment type="function">
    <text evidence="1">Plays a critical role in the incorporation of lipoproteins in the outer membrane after they are released by the LolA protein.</text>
</comment>
<comment type="subunit">
    <text evidence="1">Monomer.</text>
</comment>
<comment type="subcellular location">
    <subcellularLocation>
        <location evidence="1">Cell outer membrane</location>
        <topology evidence="1">Lipid-anchor</topology>
    </subcellularLocation>
</comment>
<comment type="similarity">
    <text evidence="1">Belongs to the LolB family.</text>
</comment>
<organism>
    <name type="scientific">Xanthomonas campestris pv. campestris (strain B100)</name>
    <dbReference type="NCBI Taxonomy" id="509169"/>
    <lineage>
        <taxon>Bacteria</taxon>
        <taxon>Pseudomonadati</taxon>
        <taxon>Pseudomonadota</taxon>
        <taxon>Gammaproteobacteria</taxon>
        <taxon>Lysobacterales</taxon>
        <taxon>Lysobacteraceae</taxon>
        <taxon>Xanthomonas</taxon>
    </lineage>
</organism>
<proteinExistence type="evidence at protein level"/>
<name>LOLB_XANCB</name>
<feature type="signal peptide" evidence="1">
    <location>
        <begin position="1"/>
        <end position="20"/>
    </location>
</feature>
<feature type="chain" id="PRO_1000100512" description="Outer-membrane lipoprotein LolB">
    <location>
        <begin position="21"/>
        <end position="218"/>
    </location>
</feature>
<feature type="lipid moiety-binding region" description="N-palmitoyl cysteine" evidence="1">
    <location>
        <position position="21"/>
    </location>
</feature>
<feature type="lipid moiety-binding region" description="S-diacylglycerol cysteine" evidence="1">
    <location>
        <position position="21"/>
    </location>
</feature>
<feature type="helix" evidence="2">
    <location>
        <begin position="41"/>
        <end position="55"/>
    </location>
</feature>
<feature type="strand" evidence="2">
    <location>
        <begin position="59"/>
        <end position="70"/>
    </location>
</feature>
<feature type="strand" evidence="2">
    <location>
        <begin position="73"/>
        <end position="84"/>
    </location>
</feature>
<feature type="strand" evidence="2">
    <location>
        <begin position="87"/>
        <end position="93"/>
    </location>
</feature>
<feature type="strand" evidence="2">
    <location>
        <begin position="95"/>
        <end position="97"/>
    </location>
</feature>
<feature type="strand" evidence="2">
    <location>
        <begin position="100"/>
        <end position="106"/>
    </location>
</feature>
<feature type="turn" evidence="2">
    <location>
        <begin position="107"/>
        <end position="109"/>
    </location>
</feature>
<feature type="strand" evidence="2">
    <location>
        <begin position="112"/>
        <end position="117"/>
    </location>
</feature>
<feature type="strand" evidence="2">
    <location>
        <begin position="122"/>
        <end position="125"/>
    </location>
</feature>
<feature type="helix" evidence="2">
    <location>
        <begin position="127"/>
        <end position="135"/>
    </location>
</feature>
<feature type="turn" evidence="2">
    <location>
        <begin position="141"/>
        <end position="143"/>
    </location>
</feature>
<feature type="helix" evidence="2">
    <location>
        <begin position="144"/>
        <end position="147"/>
    </location>
</feature>
<feature type="turn" evidence="2">
    <location>
        <begin position="148"/>
        <end position="150"/>
    </location>
</feature>
<feature type="strand" evidence="2">
    <location>
        <begin position="160"/>
        <end position="163"/>
    </location>
</feature>
<feature type="strand" evidence="2">
    <location>
        <begin position="167"/>
        <end position="174"/>
    </location>
</feature>
<feature type="strand" evidence="2">
    <location>
        <begin position="177"/>
        <end position="185"/>
    </location>
</feature>
<feature type="strand" evidence="2">
    <location>
        <begin position="189"/>
        <end position="191"/>
    </location>
</feature>
<feature type="strand" evidence="2">
    <location>
        <begin position="194"/>
        <end position="202"/>
    </location>
</feature>
<feature type="strand" evidence="2">
    <location>
        <begin position="205"/>
        <end position="215"/>
    </location>
</feature>